<keyword id="KW-0067">ATP-binding</keyword>
<keyword id="KW-0342">GTP-binding</keyword>
<keyword id="KW-0547">Nucleotide-binding</keyword>
<name>Y806_STAA2</name>
<protein>
    <recommendedName>
        <fullName evidence="1">Nucleotide-binding protein SaurJH1_0806</fullName>
    </recommendedName>
</protein>
<accession>A6TZP4</accession>
<sequence length="303" mass="34812">MDNNEKEKSKSELLVVTGLSGAGKSLVIQCLEDMGYFCVDNLPPVLLPKFVELMEQGNPSLRKVAIAIDLRGKELFNSLVAVVDKVKSESDVIIDVMFLEASTEKLISRYKETRRAHPLMEQGKRSLINAINDEREHLSQIRSIANFVIDTTKLSPKELKERIRRYYEDEEFETFTINVTSFGFKHGIQMDADLVFDVRFLPNPYYVVDLRPLTGLDKDVYNYVMKWKETEIFFEKLTDLLDFMIPGYKKEGKSQLVIAIGCTGGQHRSVALAERLGNYLNEVFEYNVYVHHRDAHIESGEKK</sequence>
<gene>
    <name type="ordered locus">SaurJH1_0806</name>
</gene>
<evidence type="ECO:0000255" key="1">
    <source>
        <dbReference type="HAMAP-Rule" id="MF_00636"/>
    </source>
</evidence>
<reference key="1">
    <citation type="submission" date="2007-06" db="EMBL/GenBank/DDBJ databases">
        <title>Complete sequence of chromosome of Staphylococcus aureus subsp. aureus JH1.</title>
        <authorList>
            <consortium name="US DOE Joint Genome Institute"/>
            <person name="Copeland A."/>
            <person name="Lucas S."/>
            <person name="Lapidus A."/>
            <person name="Barry K."/>
            <person name="Detter J.C."/>
            <person name="Glavina del Rio T."/>
            <person name="Hammon N."/>
            <person name="Israni S."/>
            <person name="Dalin E."/>
            <person name="Tice H."/>
            <person name="Pitluck S."/>
            <person name="Chain P."/>
            <person name="Malfatti S."/>
            <person name="Shin M."/>
            <person name="Vergez L."/>
            <person name="Schmutz J."/>
            <person name="Larimer F."/>
            <person name="Land M."/>
            <person name="Hauser L."/>
            <person name="Kyrpides N."/>
            <person name="Ivanova N."/>
            <person name="Tomasz A."/>
            <person name="Richardson P."/>
        </authorList>
    </citation>
    <scope>NUCLEOTIDE SEQUENCE [LARGE SCALE GENOMIC DNA]</scope>
    <source>
        <strain>JH1</strain>
    </source>
</reference>
<comment type="function">
    <text evidence="1">Displays ATPase and GTPase activities.</text>
</comment>
<comment type="similarity">
    <text evidence="1">Belongs to the RapZ-like family.</text>
</comment>
<feature type="chain" id="PRO_1000082667" description="Nucleotide-binding protein SaurJH1_0806">
    <location>
        <begin position="1"/>
        <end position="303"/>
    </location>
</feature>
<feature type="binding site" evidence="1">
    <location>
        <begin position="18"/>
        <end position="25"/>
    </location>
    <ligand>
        <name>ATP</name>
        <dbReference type="ChEBI" id="CHEBI:30616"/>
    </ligand>
</feature>
<feature type="binding site" evidence="1">
    <location>
        <begin position="69"/>
        <end position="72"/>
    </location>
    <ligand>
        <name>GTP</name>
        <dbReference type="ChEBI" id="CHEBI:37565"/>
    </ligand>
</feature>
<dbReference type="EMBL" id="CP000736">
    <property type="protein sequence ID" value="ABR51662.1"/>
    <property type="molecule type" value="Genomic_DNA"/>
</dbReference>
<dbReference type="SMR" id="A6TZP4"/>
<dbReference type="KEGG" id="sah:SaurJH1_0806"/>
<dbReference type="HOGENOM" id="CLU_059558_0_0_9"/>
<dbReference type="GO" id="GO:0005524">
    <property type="term" value="F:ATP binding"/>
    <property type="evidence" value="ECO:0007669"/>
    <property type="project" value="UniProtKB-UniRule"/>
</dbReference>
<dbReference type="GO" id="GO:0005525">
    <property type="term" value="F:GTP binding"/>
    <property type="evidence" value="ECO:0007669"/>
    <property type="project" value="UniProtKB-UniRule"/>
</dbReference>
<dbReference type="Gene3D" id="3.40.50.300">
    <property type="entry name" value="P-loop containing nucleotide triphosphate hydrolases"/>
    <property type="match status" value="1"/>
</dbReference>
<dbReference type="HAMAP" id="MF_00636">
    <property type="entry name" value="RapZ_like"/>
    <property type="match status" value="1"/>
</dbReference>
<dbReference type="InterPro" id="IPR027417">
    <property type="entry name" value="P-loop_NTPase"/>
</dbReference>
<dbReference type="InterPro" id="IPR005337">
    <property type="entry name" value="RapZ-like"/>
</dbReference>
<dbReference type="InterPro" id="IPR053930">
    <property type="entry name" value="RapZ-like_N"/>
</dbReference>
<dbReference type="InterPro" id="IPR053931">
    <property type="entry name" value="RapZ_C"/>
</dbReference>
<dbReference type="NCBIfam" id="NF003828">
    <property type="entry name" value="PRK05416.1"/>
    <property type="match status" value="1"/>
</dbReference>
<dbReference type="PANTHER" id="PTHR30448">
    <property type="entry name" value="RNASE ADAPTER PROTEIN RAPZ"/>
    <property type="match status" value="1"/>
</dbReference>
<dbReference type="PANTHER" id="PTHR30448:SF0">
    <property type="entry name" value="RNASE ADAPTER PROTEIN RAPZ"/>
    <property type="match status" value="1"/>
</dbReference>
<dbReference type="Pfam" id="PF22740">
    <property type="entry name" value="PapZ_C"/>
    <property type="match status" value="1"/>
</dbReference>
<dbReference type="Pfam" id="PF03668">
    <property type="entry name" value="RapZ-like_N"/>
    <property type="match status" value="1"/>
</dbReference>
<dbReference type="PIRSF" id="PIRSF005052">
    <property type="entry name" value="P-loopkin"/>
    <property type="match status" value="1"/>
</dbReference>
<dbReference type="SUPFAM" id="SSF52540">
    <property type="entry name" value="P-loop containing nucleoside triphosphate hydrolases"/>
    <property type="match status" value="1"/>
</dbReference>
<organism>
    <name type="scientific">Staphylococcus aureus (strain JH1)</name>
    <dbReference type="NCBI Taxonomy" id="359787"/>
    <lineage>
        <taxon>Bacteria</taxon>
        <taxon>Bacillati</taxon>
        <taxon>Bacillota</taxon>
        <taxon>Bacilli</taxon>
        <taxon>Bacillales</taxon>
        <taxon>Staphylococcaceae</taxon>
        <taxon>Staphylococcus</taxon>
    </lineage>
</organism>
<proteinExistence type="inferred from homology"/>